<reference key="1">
    <citation type="journal article" date="2007" name="Proc. Natl. Acad. Sci. U.S.A.">
        <title>Genome sequencing reveals complex secondary metabolome in the marine actinomycete Salinispora tropica.</title>
        <authorList>
            <person name="Udwary D.W."/>
            <person name="Zeigler L."/>
            <person name="Asolkar R.N."/>
            <person name="Singan V."/>
            <person name="Lapidus A."/>
            <person name="Fenical W."/>
            <person name="Jensen P.R."/>
            <person name="Moore B.S."/>
        </authorList>
    </citation>
    <scope>NUCLEOTIDE SEQUENCE [LARGE SCALE GENOMIC DNA]</scope>
    <source>
        <strain>ATCC BAA-916 / DSM 44818 / JCM 13857 / NBRC 105044 / CNB-440</strain>
    </source>
</reference>
<feature type="propeptide" id="PRO_0000397578" description="Removed in mature form; by autocatalysis" evidence="1">
    <location>
        <begin position="1"/>
        <end position="53"/>
    </location>
</feature>
<feature type="chain" id="PRO_0000397579" description="Proteasome subunit beta 2">
    <location>
        <begin position="54"/>
        <end position="279"/>
    </location>
</feature>
<feature type="active site" description="Nucleophile" evidence="1">
    <location>
        <position position="54"/>
    </location>
</feature>
<comment type="function">
    <text evidence="1">Component of the proteasome core, a large protease complex with broad specificity involved in protein degradation.</text>
</comment>
<comment type="catalytic activity">
    <reaction evidence="1">
        <text>Cleavage of peptide bonds with very broad specificity.</text>
        <dbReference type="EC" id="3.4.25.1"/>
    </reaction>
</comment>
<comment type="activity regulation">
    <text evidence="1">The formation of the proteasomal ATPase ARC-20S proteasome complex, likely via the docking of the C-termini of ARC into the intersubunit pockets in the alpha-rings, may trigger opening of the gate for substrate entry. Interconversion between the open-gate and close-gate conformations leads to a dynamic regulation of the 20S proteasome proteolysis activity.</text>
</comment>
<comment type="pathway">
    <text evidence="1">Protein degradation; proteasomal Pup-dependent pathway.</text>
</comment>
<comment type="subunit">
    <text evidence="1">The 20S proteasome core is composed of 14 alpha and 14 beta subunits that assemble into four stacked heptameric rings, resulting in a barrel-shaped structure. The two inner rings, each composed of seven catalytic beta subunits, are sandwiched by two outer rings, each composed of seven alpha subunits. The catalytic chamber with the active sites is on the inside of the barrel. Has a gated structure, the ends of the cylinder being occluded by the N-termini of the alpha-subunits. Is capped by the proteasome-associated ATPase, ARC.</text>
</comment>
<comment type="subcellular location">
    <subcellularLocation>
        <location evidence="1">Cytoplasm</location>
    </subcellularLocation>
</comment>
<comment type="similarity">
    <text evidence="1">Belongs to the peptidase T1B family.</text>
</comment>
<comment type="sequence caution" evidence="2">
    <conflict type="erroneous initiation">
        <sequence resource="EMBL-CDS" id="ABP54694"/>
    </conflict>
    <text>Extended N-terminus.</text>
</comment>
<sequence>MAAAFDPSGRFPDLFTSVGTSSFSAFLSKAAPELLPGRRPLPPGMATGLTPHATTIVAIATAGGVVLAGDRRATMGNLIAQRDVEKVHPADAYSLVGMAGAAGIGIELTRLFQVELEHYEKTEGAMLSLDGKANRLAAMVRGNLGAAMQGLAVVPLFAGFDLAATDPAKAGRIFSFDVTGGPYEETGYDAVGSGSVFAKSALKKRFRLGLSVDDAVRLAVEALYDAADDDTATGGPDLTRRIYPVVMSATAEGTHRLTEAETAAIAESVVAGRMENPGG</sequence>
<keyword id="KW-0068">Autocatalytic cleavage</keyword>
<keyword id="KW-0963">Cytoplasm</keyword>
<keyword id="KW-0378">Hydrolase</keyword>
<keyword id="KW-0645">Protease</keyword>
<keyword id="KW-0647">Proteasome</keyword>
<keyword id="KW-1185">Reference proteome</keyword>
<keyword id="KW-0888">Threonine protease</keyword>
<keyword id="KW-0865">Zymogen</keyword>
<organism>
    <name type="scientific">Salinispora tropica (strain ATCC BAA-916 / DSM 44818 / JCM 13857 / NBRC 105044 / CNB-440)</name>
    <dbReference type="NCBI Taxonomy" id="369723"/>
    <lineage>
        <taxon>Bacteria</taxon>
        <taxon>Bacillati</taxon>
        <taxon>Actinomycetota</taxon>
        <taxon>Actinomycetes</taxon>
        <taxon>Micromonosporales</taxon>
        <taxon>Micromonosporaceae</taxon>
        <taxon>Salinispora</taxon>
    </lineage>
</organism>
<proteinExistence type="inferred from homology"/>
<name>PSB2_SALTO</name>
<dbReference type="EC" id="3.4.25.1" evidence="1"/>
<dbReference type="EMBL" id="CP000667">
    <property type="protein sequence ID" value="ABP54694.1"/>
    <property type="status" value="ALT_INIT"/>
    <property type="molecule type" value="Genomic_DNA"/>
</dbReference>
<dbReference type="SMR" id="A4X744"/>
<dbReference type="STRING" id="369723.Strop_2244"/>
<dbReference type="MEROPS" id="T01.005"/>
<dbReference type="KEGG" id="stp:Strop_2244"/>
<dbReference type="PATRIC" id="fig|369723.5.peg.2302"/>
<dbReference type="eggNOG" id="COG0638">
    <property type="taxonomic scope" value="Bacteria"/>
</dbReference>
<dbReference type="HOGENOM" id="CLU_035750_2_0_11"/>
<dbReference type="UniPathway" id="UPA00997"/>
<dbReference type="Proteomes" id="UP000000235">
    <property type="component" value="Chromosome"/>
</dbReference>
<dbReference type="GO" id="GO:0005737">
    <property type="term" value="C:cytoplasm"/>
    <property type="evidence" value="ECO:0007669"/>
    <property type="project" value="UniProtKB-SubCell"/>
</dbReference>
<dbReference type="GO" id="GO:0019774">
    <property type="term" value="C:proteasome core complex, beta-subunit complex"/>
    <property type="evidence" value="ECO:0007669"/>
    <property type="project" value="UniProtKB-UniRule"/>
</dbReference>
<dbReference type="GO" id="GO:0004298">
    <property type="term" value="F:threonine-type endopeptidase activity"/>
    <property type="evidence" value="ECO:0007669"/>
    <property type="project" value="UniProtKB-UniRule"/>
</dbReference>
<dbReference type="GO" id="GO:0019941">
    <property type="term" value="P:modification-dependent protein catabolic process"/>
    <property type="evidence" value="ECO:0007669"/>
    <property type="project" value="UniProtKB-UniRule"/>
</dbReference>
<dbReference type="GO" id="GO:0010498">
    <property type="term" value="P:proteasomal protein catabolic process"/>
    <property type="evidence" value="ECO:0007669"/>
    <property type="project" value="UniProtKB-UniRule"/>
</dbReference>
<dbReference type="CDD" id="cd01906">
    <property type="entry name" value="proteasome_protease_HslV"/>
    <property type="match status" value="1"/>
</dbReference>
<dbReference type="Gene3D" id="3.60.20.10">
    <property type="entry name" value="Glutamine Phosphoribosylpyrophosphate, subunit 1, domain 1"/>
    <property type="match status" value="1"/>
</dbReference>
<dbReference type="HAMAP" id="MF_02113_B">
    <property type="entry name" value="Proteasome_B_B"/>
    <property type="match status" value="1"/>
</dbReference>
<dbReference type="InterPro" id="IPR029055">
    <property type="entry name" value="Ntn_hydrolases_N"/>
</dbReference>
<dbReference type="InterPro" id="IPR001353">
    <property type="entry name" value="Proteasome_sua/b"/>
</dbReference>
<dbReference type="InterPro" id="IPR023333">
    <property type="entry name" value="Proteasome_suB-type"/>
</dbReference>
<dbReference type="InterPro" id="IPR022483">
    <property type="entry name" value="PSB_actinobac"/>
</dbReference>
<dbReference type="NCBIfam" id="TIGR03690">
    <property type="entry name" value="20S_bact_beta"/>
    <property type="match status" value="1"/>
</dbReference>
<dbReference type="PANTHER" id="PTHR32194:SF0">
    <property type="entry name" value="ATP-DEPENDENT PROTEASE SUBUNIT HSLV"/>
    <property type="match status" value="1"/>
</dbReference>
<dbReference type="PANTHER" id="PTHR32194">
    <property type="entry name" value="METALLOPROTEASE TLDD"/>
    <property type="match status" value="1"/>
</dbReference>
<dbReference type="Pfam" id="PF00227">
    <property type="entry name" value="Proteasome"/>
    <property type="match status" value="1"/>
</dbReference>
<dbReference type="SUPFAM" id="SSF56235">
    <property type="entry name" value="N-terminal nucleophile aminohydrolases (Ntn hydrolases)"/>
    <property type="match status" value="1"/>
</dbReference>
<dbReference type="PROSITE" id="PS51476">
    <property type="entry name" value="PROTEASOME_BETA_2"/>
    <property type="match status" value="1"/>
</dbReference>
<protein>
    <recommendedName>
        <fullName evidence="1">Proteasome subunit beta 2</fullName>
        <ecNumber evidence="1">3.4.25.1</ecNumber>
    </recommendedName>
    <alternativeName>
        <fullName evidence="1">20S proteasome beta subunit 2</fullName>
    </alternativeName>
    <alternativeName>
        <fullName evidence="1">Proteasome core protein PrcB 2</fullName>
    </alternativeName>
</protein>
<evidence type="ECO:0000255" key="1">
    <source>
        <dbReference type="HAMAP-Rule" id="MF_02113"/>
    </source>
</evidence>
<evidence type="ECO:0000305" key="2"/>
<gene>
    <name evidence="1" type="primary">prcB2</name>
    <name type="ordered locus">Strop_2244</name>
</gene>
<accession>A4X744</accession>